<feature type="chain" id="PRO_0000371524" description="Mannitol-1-phosphate 5-dehydrogenase">
    <location>
        <begin position="1"/>
        <end position="388"/>
    </location>
</feature>
<feature type="active site" evidence="1">
    <location>
        <position position="213"/>
    </location>
</feature>
<feature type="binding site" evidence="1">
    <location>
        <begin position="5"/>
        <end position="16"/>
    </location>
    <ligand>
        <name>NAD(+)</name>
        <dbReference type="ChEBI" id="CHEBI:57540"/>
    </ligand>
</feature>
<protein>
    <recommendedName>
        <fullName>Mannitol-1-phosphate 5-dehydrogenase</fullName>
        <shortName>M1PDH</shortName>
        <shortName>MPD</shortName>
        <shortName>MPDH</shortName>
        <ecNumber>1.1.1.17</ecNumber>
    </recommendedName>
</protein>
<organism>
    <name type="scientific">Aspergillus terreus (strain NIH 2624 / FGSC A1156)</name>
    <dbReference type="NCBI Taxonomy" id="341663"/>
    <lineage>
        <taxon>Eukaryota</taxon>
        <taxon>Fungi</taxon>
        <taxon>Dikarya</taxon>
        <taxon>Ascomycota</taxon>
        <taxon>Pezizomycotina</taxon>
        <taxon>Eurotiomycetes</taxon>
        <taxon>Eurotiomycetidae</taxon>
        <taxon>Eurotiales</taxon>
        <taxon>Aspergillaceae</taxon>
        <taxon>Aspergillus</taxon>
        <taxon>Aspergillus subgen. Circumdati</taxon>
    </lineage>
</organism>
<sequence>MGKKAIQFGGGNIGRGFVAEFLHEAGYEVVFVDVMDAVVSALQTTPSYNVTEVSKDGENTKTISNYRAINSKTNESDAVKEIATADVVTCAVGPNILKFIAPLIAKGIDARTESKPVAVIACENAIGATDTLHGFIKEHTPKDRLDTLYDRARFANSAIDRIVPNQPPNSGLNVRIEKFYEWAVEQTPFGSFGHPDIPAIHWVDNLEPYIERKLFTVNTGHATTAYYGHLRGKKMIADALADDEIRSMVHKVLDETASLIVSKHGIPEDEQKEYVDTIIGRMSNPYLEDNIERVGRAPLRKLSRKERFIGPASQLAERGQKFDALVDAIEMALRFQNVPGDQESADLAQILKQKSSEDATSELTGLEKDHPLYSPVLERVAKVQQDTK</sequence>
<gene>
    <name type="primary">mpdA</name>
    <name type="ORF">ATEG_01508</name>
</gene>
<keyword id="KW-0520">NAD</keyword>
<keyword id="KW-0560">Oxidoreductase</keyword>
<keyword id="KW-1185">Reference proteome</keyword>
<reference key="1">
    <citation type="submission" date="2005-09" db="EMBL/GenBank/DDBJ databases">
        <title>Annotation of the Aspergillus terreus NIH2624 genome.</title>
        <authorList>
            <person name="Birren B.W."/>
            <person name="Lander E.S."/>
            <person name="Galagan J.E."/>
            <person name="Nusbaum C."/>
            <person name="Devon K."/>
            <person name="Henn M."/>
            <person name="Ma L.-J."/>
            <person name="Jaffe D.B."/>
            <person name="Butler J."/>
            <person name="Alvarez P."/>
            <person name="Gnerre S."/>
            <person name="Grabherr M."/>
            <person name="Kleber M."/>
            <person name="Mauceli E.W."/>
            <person name="Brockman W."/>
            <person name="Rounsley S."/>
            <person name="Young S.K."/>
            <person name="LaButti K."/>
            <person name="Pushparaj V."/>
            <person name="DeCaprio D."/>
            <person name="Crawford M."/>
            <person name="Koehrsen M."/>
            <person name="Engels R."/>
            <person name="Montgomery P."/>
            <person name="Pearson M."/>
            <person name="Howarth C."/>
            <person name="Larson L."/>
            <person name="Luoma S."/>
            <person name="White J."/>
            <person name="Alvarado L."/>
            <person name="Kodira C.D."/>
            <person name="Zeng Q."/>
            <person name="Oleary S."/>
            <person name="Yandava C."/>
            <person name="Denning D.W."/>
            <person name="Nierman W.C."/>
            <person name="Milne T."/>
            <person name="Madden K."/>
        </authorList>
    </citation>
    <scope>NUCLEOTIDE SEQUENCE [LARGE SCALE GENOMIC DNA]</scope>
    <source>
        <strain>NIH 2624 / FGSC A1156</strain>
    </source>
</reference>
<name>MTLD_ASPTN</name>
<accession>Q0CXS6</accession>
<comment type="function">
    <text evidence="1">Catalyzes the NAD(H)-dependent interconversion of D-fructose 6-phosphate and D-mannitol 1-phosphate in the mannitol metabolic pathway.</text>
</comment>
<comment type="catalytic activity">
    <reaction>
        <text>D-mannitol 1-phosphate + NAD(+) = beta-D-fructose 6-phosphate + NADH + H(+)</text>
        <dbReference type="Rhea" id="RHEA:19661"/>
        <dbReference type="ChEBI" id="CHEBI:15378"/>
        <dbReference type="ChEBI" id="CHEBI:57540"/>
        <dbReference type="ChEBI" id="CHEBI:57634"/>
        <dbReference type="ChEBI" id="CHEBI:57945"/>
        <dbReference type="ChEBI" id="CHEBI:61381"/>
        <dbReference type="EC" id="1.1.1.17"/>
    </reaction>
</comment>
<comment type="subunit">
    <text evidence="1">Monomer.</text>
</comment>
<comment type="similarity">
    <text evidence="2">Belongs to the mannitol dehydrogenase family.</text>
</comment>
<evidence type="ECO:0000250" key="1"/>
<evidence type="ECO:0000305" key="2"/>
<proteinExistence type="inferred from homology"/>
<dbReference type="EC" id="1.1.1.17"/>
<dbReference type="EMBL" id="CH476595">
    <property type="protein sequence ID" value="EAU38265.1"/>
    <property type="molecule type" value="Genomic_DNA"/>
</dbReference>
<dbReference type="RefSeq" id="XP_001208873.1">
    <property type="nucleotide sequence ID" value="XM_001208873.1"/>
</dbReference>
<dbReference type="SMR" id="Q0CXS6"/>
<dbReference type="STRING" id="341663.Q0CXS6"/>
<dbReference type="EnsemblFungi" id="EAU38265">
    <property type="protein sequence ID" value="EAU38265"/>
    <property type="gene ID" value="ATEG_01508"/>
</dbReference>
<dbReference type="GeneID" id="4315529"/>
<dbReference type="VEuPathDB" id="FungiDB:ATEG_01508"/>
<dbReference type="eggNOG" id="ENOG502QVPN">
    <property type="taxonomic scope" value="Eukaryota"/>
</dbReference>
<dbReference type="HOGENOM" id="CLU_036089_0_1_1"/>
<dbReference type="OMA" id="APFIERK"/>
<dbReference type="OrthoDB" id="418169at2759"/>
<dbReference type="Proteomes" id="UP000007963">
    <property type="component" value="Unassembled WGS sequence"/>
</dbReference>
<dbReference type="GO" id="GO:0005829">
    <property type="term" value="C:cytosol"/>
    <property type="evidence" value="ECO:0007669"/>
    <property type="project" value="TreeGrafter"/>
</dbReference>
<dbReference type="GO" id="GO:0008926">
    <property type="term" value="F:mannitol-1-phosphate 5-dehydrogenase activity"/>
    <property type="evidence" value="ECO:0007669"/>
    <property type="project" value="UniProtKB-EC"/>
</dbReference>
<dbReference type="GO" id="GO:0019592">
    <property type="term" value="P:mannitol catabolic process"/>
    <property type="evidence" value="ECO:0007669"/>
    <property type="project" value="TreeGrafter"/>
</dbReference>
<dbReference type="FunFam" id="1.10.1040.10:FF:000009">
    <property type="entry name" value="Mannitol-1-phosphate 5-dehydrogenase"/>
    <property type="match status" value="1"/>
</dbReference>
<dbReference type="FunFam" id="3.40.50.720:FF:000316">
    <property type="entry name" value="Mannitol-1-phosphate 5-dehydrogenase"/>
    <property type="match status" value="1"/>
</dbReference>
<dbReference type="Gene3D" id="1.10.1040.10">
    <property type="entry name" value="N-(1-d-carboxylethyl)-l-norvaline Dehydrogenase, domain 2"/>
    <property type="match status" value="1"/>
</dbReference>
<dbReference type="Gene3D" id="3.40.50.720">
    <property type="entry name" value="NAD(P)-binding Rossmann-like Domain"/>
    <property type="match status" value="1"/>
</dbReference>
<dbReference type="HAMAP" id="MF_00196">
    <property type="entry name" value="Mannitol_dehydrog"/>
    <property type="match status" value="1"/>
</dbReference>
<dbReference type="InterPro" id="IPR008927">
    <property type="entry name" value="6-PGluconate_DH-like_C_sf"/>
</dbReference>
<dbReference type="InterPro" id="IPR013328">
    <property type="entry name" value="6PGD_dom2"/>
</dbReference>
<dbReference type="InterPro" id="IPR023028">
    <property type="entry name" value="Mannitol_1_phos_5_DH"/>
</dbReference>
<dbReference type="InterPro" id="IPR000669">
    <property type="entry name" value="Mannitol_DH"/>
</dbReference>
<dbReference type="InterPro" id="IPR013118">
    <property type="entry name" value="Mannitol_DH_C"/>
</dbReference>
<dbReference type="InterPro" id="IPR013131">
    <property type="entry name" value="Mannitol_DH_N"/>
</dbReference>
<dbReference type="InterPro" id="IPR036291">
    <property type="entry name" value="NAD(P)-bd_dom_sf"/>
</dbReference>
<dbReference type="NCBIfam" id="NF002652">
    <property type="entry name" value="PRK02318.2-5"/>
    <property type="match status" value="1"/>
</dbReference>
<dbReference type="PANTHER" id="PTHR30524:SF0">
    <property type="entry name" value="ALTRONATE OXIDOREDUCTASE-RELATED"/>
    <property type="match status" value="1"/>
</dbReference>
<dbReference type="PANTHER" id="PTHR30524">
    <property type="entry name" value="MANNITOL-1-PHOSPHATE 5-DEHYDROGENASE"/>
    <property type="match status" value="1"/>
</dbReference>
<dbReference type="Pfam" id="PF01232">
    <property type="entry name" value="Mannitol_dh"/>
    <property type="match status" value="1"/>
</dbReference>
<dbReference type="Pfam" id="PF08125">
    <property type="entry name" value="Mannitol_dh_C"/>
    <property type="match status" value="1"/>
</dbReference>
<dbReference type="PRINTS" id="PR00084">
    <property type="entry name" value="MTLDHDRGNASE"/>
</dbReference>
<dbReference type="SUPFAM" id="SSF48179">
    <property type="entry name" value="6-phosphogluconate dehydrogenase C-terminal domain-like"/>
    <property type="match status" value="1"/>
</dbReference>
<dbReference type="SUPFAM" id="SSF51735">
    <property type="entry name" value="NAD(P)-binding Rossmann-fold domains"/>
    <property type="match status" value="1"/>
</dbReference>